<sequence length="199" mass="23442">MGEAAKDQTEEVIQAWYLDNKEEDQKLPHHKDPKEFVSLDKLAELGVLCWRLDADNYETDEELKRIRESRGYSYMDLCEVCPEKLPNYEEKVKMFFEEHLHIDEEIRYCLAGSGYFDVRDLNDIWIRVWVKKGGLIVFPAGIYHRFTVDSDNYMKAMRLFVGGPVWTAYNRPHDHLPARKAYMKKFLKVIGDRNIDASA</sequence>
<reference key="1">
    <citation type="journal article" date="1999" name="Nature">
        <title>Sequence and analysis of chromosome 2 of the plant Arabidopsis thaliana.</title>
        <authorList>
            <person name="Lin X."/>
            <person name="Kaul S."/>
            <person name="Rounsley S.D."/>
            <person name="Shea T.P."/>
            <person name="Benito M.-I."/>
            <person name="Town C.D."/>
            <person name="Fujii C.Y."/>
            <person name="Mason T.M."/>
            <person name="Bowman C.L."/>
            <person name="Barnstead M.E."/>
            <person name="Feldblyum T.V."/>
            <person name="Buell C.R."/>
            <person name="Ketchum K.A."/>
            <person name="Lee J.J."/>
            <person name="Ronning C.M."/>
            <person name="Koo H.L."/>
            <person name="Moffat K.S."/>
            <person name="Cronin L.A."/>
            <person name="Shen M."/>
            <person name="Pai G."/>
            <person name="Van Aken S."/>
            <person name="Umayam L."/>
            <person name="Tallon L.J."/>
            <person name="Gill J.E."/>
            <person name="Adams M.D."/>
            <person name="Carrera A.J."/>
            <person name="Creasy T.H."/>
            <person name="Goodman H.M."/>
            <person name="Somerville C.R."/>
            <person name="Copenhaver G.P."/>
            <person name="Preuss D."/>
            <person name="Nierman W.C."/>
            <person name="White O."/>
            <person name="Eisen J.A."/>
            <person name="Salzberg S.L."/>
            <person name="Fraser C.M."/>
            <person name="Venter J.C."/>
        </authorList>
    </citation>
    <scope>NUCLEOTIDE SEQUENCE [LARGE SCALE GENOMIC DNA]</scope>
    <source>
        <strain>cv. Columbia</strain>
    </source>
</reference>
<reference key="2">
    <citation type="journal article" date="2017" name="Plant J.">
        <title>Araport11: a complete reannotation of the Arabidopsis thaliana reference genome.</title>
        <authorList>
            <person name="Cheng C.Y."/>
            <person name="Krishnakumar V."/>
            <person name="Chan A.P."/>
            <person name="Thibaud-Nissen F."/>
            <person name="Schobel S."/>
            <person name="Town C.D."/>
        </authorList>
    </citation>
    <scope>GENOME REANNOTATION</scope>
    <source>
        <strain>cv. Columbia</strain>
    </source>
</reference>
<reference key="3">
    <citation type="journal article" date="2003" name="Science">
        <title>Empirical analysis of transcriptional activity in the Arabidopsis genome.</title>
        <authorList>
            <person name="Yamada K."/>
            <person name="Lim J."/>
            <person name="Dale J.M."/>
            <person name="Chen H."/>
            <person name="Shinn P."/>
            <person name="Palm C.J."/>
            <person name="Southwick A.M."/>
            <person name="Wu H.C."/>
            <person name="Kim C.J."/>
            <person name="Nguyen M."/>
            <person name="Pham P.K."/>
            <person name="Cheuk R.F."/>
            <person name="Karlin-Newmann G."/>
            <person name="Liu S.X."/>
            <person name="Lam B."/>
            <person name="Sakano H."/>
            <person name="Wu T."/>
            <person name="Yu G."/>
            <person name="Miranda M."/>
            <person name="Quach H.L."/>
            <person name="Tripp M."/>
            <person name="Chang C.H."/>
            <person name="Lee J.M."/>
            <person name="Toriumi M.J."/>
            <person name="Chan M.M."/>
            <person name="Tang C.C."/>
            <person name="Onodera C.S."/>
            <person name="Deng J.M."/>
            <person name="Akiyama K."/>
            <person name="Ansari Y."/>
            <person name="Arakawa T."/>
            <person name="Banh J."/>
            <person name="Banno F."/>
            <person name="Bowser L."/>
            <person name="Brooks S.Y."/>
            <person name="Carninci P."/>
            <person name="Chao Q."/>
            <person name="Choy N."/>
            <person name="Enju A."/>
            <person name="Goldsmith A.D."/>
            <person name="Gurjal M."/>
            <person name="Hansen N.F."/>
            <person name="Hayashizaki Y."/>
            <person name="Johnson-Hopson C."/>
            <person name="Hsuan V.W."/>
            <person name="Iida K."/>
            <person name="Karnes M."/>
            <person name="Khan S."/>
            <person name="Koesema E."/>
            <person name="Ishida J."/>
            <person name="Jiang P.X."/>
            <person name="Jones T."/>
            <person name="Kawai J."/>
            <person name="Kamiya A."/>
            <person name="Meyers C."/>
            <person name="Nakajima M."/>
            <person name="Narusaka M."/>
            <person name="Seki M."/>
            <person name="Sakurai T."/>
            <person name="Satou M."/>
            <person name="Tamse R."/>
            <person name="Vaysberg M."/>
            <person name="Wallender E.K."/>
            <person name="Wong C."/>
            <person name="Yamamura Y."/>
            <person name="Yuan S."/>
            <person name="Shinozaki K."/>
            <person name="Davis R.W."/>
            <person name="Theologis A."/>
            <person name="Ecker J.R."/>
        </authorList>
    </citation>
    <scope>NUCLEOTIDE SEQUENCE [LARGE SCALE MRNA]</scope>
    <source>
        <strain>cv. Columbia</strain>
    </source>
</reference>
<reference key="4">
    <citation type="submission" date="2004-09" db="EMBL/GenBank/DDBJ databases">
        <title>Large-scale analysis of RIKEN Arabidopsis full-length (RAFL) cDNAs.</title>
        <authorList>
            <person name="Totoki Y."/>
            <person name="Seki M."/>
            <person name="Ishida J."/>
            <person name="Nakajima M."/>
            <person name="Enju A."/>
            <person name="Kamiya A."/>
            <person name="Narusaka M."/>
            <person name="Shin-i T."/>
            <person name="Nakagawa M."/>
            <person name="Sakamoto N."/>
            <person name="Oishi K."/>
            <person name="Kohara Y."/>
            <person name="Kobayashi M."/>
            <person name="Toyoda A."/>
            <person name="Sakaki Y."/>
            <person name="Sakurai T."/>
            <person name="Iida K."/>
            <person name="Akiyama K."/>
            <person name="Satou M."/>
            <person name="Toyoda T."/>
            <person name="Konagaya A."/>
            <person name="Carninci P."/>
            <person name="Kawai J."/>
            <person name="Hayashizaki Y."/>
            <person name="Shinozaki K."/>
        </authorList>
    </citation>
    <scope>NUCLEOTIDE SEQUENCE [LARGE SCALE MRNA]</scope>
    <source>
        <strain>cv. Columbia</strain>
    </source>
</reference>
<feature type="chain" id="PRO_0000223192" description="Acireductone dioxygenase 1">
    <location>
        <begin position="1"/>
        <end position="199"/>
    </location>
</feature>
<feature type="binding site" evidence="1">
    <location>
        <position position="99"/>
    </location>
    <ligand>
        <name>Fe(2+)</name>
        <dbReference type="ChEBI" id="CHEBI:29033"/>
        <note>for iron-dependent acireductone dioxygenase activity</note>
    </ligand>
</feature>
<feature type="binding site" evidence="1">
    <location>
        <position position="99"/>
    </location>
    <ligand>
        <name>Ni(2+)</name>
        <dbReference type="ChEBI" id="CHEBI:49786"/>
        <note>for nickel-dependent acireductone dioxygenase activity</note>
    </ligand>
</feature>
<feature type="binding site" evidence="1">
    <location>
        <position position="101"/>
    </location>
    <ligand>
        <name>Fe(2+)</name>
        <dbReference type="ChEBI" id="CHEBI:29033"/>
        <note>for iron-dependent acireductone dioxygenase activity</note>
    </ligand>
</feature>
<feature type="binding site" evidence="1">
    <location>
        <position position="101"/>
    </location>
    <ligand>
        <name>Ni(2+)</name>
        <dbReference type="ChEBI" id="CHEBI:49786"/>
        <note>for nickel-dependent acireductone dioxygenase activity</note>
    </ligand>
</feature>
<feature type="binding site" evidence="1">
    <location>
        <position position="105"/>
    </location>
    <ligand>
        <name>Fe(2+)</name>
        <dbReference type="ChEBI" id="CHEBI:29033"/>
        <note>for iron-dependent acireductone dioxygenase activity</note>
    </ligand>
</feature>
<feature type="binding site" evidence="1">
    <location>
        <position position="105"/>
    </location>
    <ligand>
        <name>Ni(2+)</name>
        <dbReference type="ChEBI" id="CHEBI:49786"/>
        <note>for nickel-dependent acireductone dioxygenase activity</note>
    </ligand>
</feature>
<feature type="binding site" evidence="1">
    <location>
        <position position="144"/>
    </location>
    <ligand>
        <name>Fe(2+)</name>
        <dbReference type="ChEBI" id="CHEBI:29033"/>
        <note>for iron-dependent acireductone dioxygenase activity</note>
    </ligand>
</feature>
<feature type="binding site" evidence="1">
    <location>
        <position position="144"/>
    </location>
    <ligand>
        <name>Ni(2+)</name>
        <dbReference type="ChEBI" id="CHEBI:49786"/>
        <note>for nickel-dependent acireductone dioxygenase activity</note>
    </ligand>
</feature>
<keyword id="KW-0028">Amino-acid biosynthesis</keyword>
<keyword id="KW-0963">Cytoplasm</keyword>
<keyword id="KW-0223">Dioxygenase</keyword>
<keyword id="KW-0408">Iron</keyword>
<keyword id="KW-0479">Metal-binding</keyword>
<keyword id="KW-0486">Methionine biosynthesis</keyword>
<keyword id="KW-0533">Nickel</keyword>
<keyword id="KW-0539">Nucleus</keyword>
<keyword id="KW-0560">Oxidoreductase</keyword>
<keyword id="KW-1185">Reference proteome</keyword>
<comment type="function">
    <text evidence="1">Catalyzes 2 different reactions between oxygen and the acireductone 1,2-dihydroxy-3-keto-5-methylthiopentene (DHK-MTPene) depending upon the metal bound in the active site. Fe-containing acireductone dioxygenase (Fe-ARD) produces formate and 2-keto-4-methylthiobutyrate (KMTB), the alpha-ketoacid precursor of methionine in the methionine recycle pathway. Ni-containing acireductone dioxygenase (Ni-ARD) produces methylthiopropionate, carbon monoxide and formate, and does not lie on the methionine recycle pathway.</text>
</comment>
<comment type="catalytic activity">
    <reaction evidence="1">
        <text>1,2-dihydroxy-5-(methylsulfanyl)pent-1-en-3-one + O2 = 4-methylsulfanyl-2-oxobutanoate + formate + 2 H(+)</text>
        <dbReference type="Rhea" id="RHEA:24504"/>
        <dbReference type="ChEBI" id="CHEBI:15378"/>
        <dbReference type="ChEBI" id="CHEBI:15379"/>
        <dbReference type="ChEBI" id="CHEBI:15740"/>
        <dbReference type="ChEBI" id="CHEBI:16723"/>
        <dbReference type="ChEBI" id="CHEBI:49252"/>
        <dbReference type="EC" id="1.13.11.54"/>
    </reaction>
</comment>
<comment type="catalytic activity">
    <reaction evidence="1">
        <text>1,2-dihydroxy-5-(methylsulfanyl)pent-1-en-3-one + O2 = 3-(methylsulfanyl)propanoate + CO + formate + 2 H(+)</text>
        <dbReference type="Rhea" id="RHEA:14161"/>
        <dbReference type="ChEBI" id="CHEBI:15378"/>
        <dbReference type="ChEBI" id="CHEBI:15379"/>
        <dbReference type="ChEBI" id="CHEBI:15740"/>
        <dbReference type="ChEBI" id="CHEBI:17245"/>
        <dbReference type="ChEBI" id="CHEBI:49016"/>
        <dbReference type="ChEBI" id="CHEBI:49252"/>
        <dbReference type="EC" id="1.13.11.53"/>
    </reaction>
</comment>
<comment type="cofactor">
    <cofactor evidence="1">
        <name>Fe(2+)</name>
        <dbReference type="ChEBI" id="CHEBI:29033"/>
    </cofactor>
    <cofactor evidence="1">
        <name>Ni(2+)</name>
        <dbReference type="ChEBI" id="CHEBI:49786"/>
    </cofactor>
    <text evidence="1">Binds either 1 Fe or Ni cation per monomer. Iron-binding promotes an acireductone dioxygenase reaction producing 2-keto-4-methylthiobutyrate, while nickel-binding promotes an acireductone dioxygenase reaction producing 3-(methylsulfanyl)propanoate.</text>
</comment>
<comment type="pathway">
    <text evidence="1">Amino-acid biosynthesis; L-methionine biosynthesis via salvage pathway; L-methionine from S-methyl-5-thio-alpha-D-ribose 1-phosphate: step 5/6.</text>
</comment>
<comment type="subcellular location">
    <subcellularLocation>
        <location evidence="1">Cytoplasm</location>
    </subcellularLocation>
    <subcellularLocation>
        <location evidence="1">Nucleus</location>
    </subcellularLocation>
</comment>
<comment type="similarity">
    <text evidence="1">Belongs to the acireductone dioxygenase (ARD) family.</text>
</comment>
<proteinExistence type="evidence at transcript level"/>
<name>MTND1_ARATH</name>
<organism>
    <name type="scientific">Arabidopsis thaliana</name>
    <name type="common">Mouse-ear cress</name>
    <dbReference type="NCBI Taxonomy" id="3702"/>
    <lineage>
        <taxon>Eukaryota</taxon>
        <taxon>Viridiplantae</taxon>
        <taxon>Streptophyta</taxon>
        <taxon>Embryophyta</taxon>
        <taxon>Tracheophyta</taxon>
        <taxon>Spermatophyta</taxon>
        <taxon>Magnoliopsida</taxon>
        <taxon>eudicotyledons</taxon>
        <taxon>Gunneridae</taxon>
        <taxon>Pentapetalae</taxon>
        <taxon>rosids</taxon>
        <taxon>malvids</taxon>
        <taxon>Brassicales</taxon>
        <taxon>Brassicaceae</taxon>
        <taxon>Camelineae</taxon>
        <taxon>Arabidopsis</taxon>
    </lineage>
</organism>
<accession>O48707</accession>
<gene>
    <name type="primary">ARD1</name>
    <name type="ordered locus">At2g26400</name>
    <name type="ORF">T9J22.7</name>
</gene>
<dbReference type="EC" id="1.13.11.54" evidence="1"/>
<dbReference type="EC" id="1.13.11.53" evidence="1"/>
<dbReference type="EMBL" id="AC002505">
    <property type="protein sequence ID" value="AAC14490.1"/>
    <property type="molecule type" value="Genomic_DNA"/>
</dbReference>
<dbReference type="EMBL" id="CP002685">
    <property type="protein sequence ID" value="AEC07833.1"/>
    <property type="molecule type" value="Genomic_DNA"/>
</dbReference>
<dbReference type="EMBL" id="BT010499">
    <property type="protein sequence ID" value="AAQ65122.1"/>
    <property type="molecule type" value="mRNA"/>
</dbReference>
<dbReference type="EMBL" id="AK176649">
    <property type="protein sequence ID" value="BAD44412.1"/>
    <property type="molecule type" value="mRNA"/>
</dbReference>
<dbReference type="PIR" id="T00973">
    <property type="entry name" value="T00973"/>
</dbReference>
<dbReference type="SMR" id="O48707"/>
<dbReference type="BioGRID" id="2532">
    <property type="interactions" value="5"/>
</dbReference>
<dbReference type="FunCoup" id="O48707">
    <property type="interactions" value="1369"/>
</dbReference>
<dbReference type="IntAct" id="O48707">
    <property type="interactions" value="1"/>
</dbReference>
<dbReference type="STRING" id="3702.O48707"/>
<dbReference type="SwissPalm" id="O48707"/>
<dbReference type="PaxDb" id="3702-AT2G26400.1"/>
<dbReference type="DNASU" id="817180"/>
<dbReference type="EnsemblPlants" id="AT2G26400.1">
    <property type="protein sequence ID" value="AT2G26400.1"/>
    <property type="gene ID" value="AT2G26400"/>
</dbReference>
<dbReference type="GeneID" id="817180"/>
<dbReference type="Gramene" id="AT2G26400.1">
    <property type="protein sequence ID" value="AT2G26400.1"/>
    <property type="gene ID" value="AT2G26400"/>
</dbReference>
<dbReference type="KEGG" id="ath:AT2G26400"/>
<dbReference type="Araport" id="AT2G26400"/>
<dbReference type="TAIR" id="AT2G26400">
    <property type="gene designation" value="ARD3"/>
</dbReference>
<dbReference type="eggNOG" id="KOG2107">
    <property type="taxonomic scope" value="Eukaryota"/>
</dbReference>
<dbReference type="HOGENOM" id="CLU_090154_0_0_1"/>
<dbReference type="InParanoid" id="O48707"/>
<dbReference type="PhylomeDB" id="O48707"/>
<dbReference type="UniPathway" id="UPA00904">
    <property type="reaction ID" value="UER00878"/>
</dbReference>
<dbReference type="PRO" id="PR:O48707"/>
<dbReference type="Proteomes" id="UP000006548">
    <property type="component" value="Chromosome 2"/>
</dbReference>
<dbReference type="ExpressionAtlas" id="O48707">
    <property type="expression patterns" value="baseline and differential"/>
</dbReference>
<dbReference type="GO" id="GO:0005829">
    <property type="term" value="C:cytosol"/>
    <property type="evidence" value="ECO:0007005"/>
    <property type="project" value="TAIR"/>
</dbReference>
<dbReference type="GO" id="GO:0005634">
    <property type="term" value="C:nucleus"/>
    <property type="evidence" value="ECO:0007669"/>
    <property type="project" value="UniProtKB-SubCell"/>
</dbReference>
<dbReference type="GO" id="GO:0010308">
    <property type="term" value="F:acireductone dioxygenase (Ni2+-requiring) activity"/>
    <property type="evidence" value="ECO:0007669"/>
    <property type="project" value="UniProtKB-UniRule"/>
</dbReference>
<dbReference type="GO" id="GO:0010309">
    <property type="term" value="F:acireductone dioxygenase [iron(II)-requiring] activity"/>
    <property type="evidence" value="ECO:0000250"/>
    <property type="project" value="TAIR"/>
</dbReference>
<dbReference type="GO" id="GO:0010297">
    <property type="term" value="F:heteropolysaccharide binding"/>
    <property type="evidence" value="ECO:0000303"/>
    <property type="project" value="TAIR"/>
</dbReference>
<dbReference type="GO" id="GO:0005506">
    <property type="term" value="F:iron ion binding"/>
    <property type="evidence" value="ECO:0007669"/>
    <property type="project" value="UniProtKB-UniRule"/>
</dbReference>
<dbReference type="GO" id="GO:0016151">
    <property type="term" value="F:nickel cation binding"/>
    <property type="evidence" value="ECO:0007669"/>
    <property type="project" value="UniProtKB-UniRule"/>
</dbReference>
<dbReference type="GO" id="GO:0019509">
    <property type="term" value="P:L-methionine salvage from methylthioadenosine"/>
    <property type="evidence" value="ECO:0007669"/>
    <property type="project" value="UniProtKB-UniRule"/>
</dbReference>
<dbReference type="CDD" id="cd02232">
    <property type="entry name" value="cupin_ARD"/>
    <property type="match status" value="1"/>
</dbReference>
<dbReference type="FunFam" id="2.60.120.10:FF:000031">
    <property type="entry name" value="1,2-dihydroxy-3-keto-5-methylthiopentene dioxygenase"/>
    <property type="match status" value="1"/>
</dbReference>
<dbReference type="Gene3D" id="2.60.120.10">
    <property type="entry name" value="Jelly Rolls"/>
    <property type="match status" value="1"/>
</dbReference>
<dbReference type="HAMAP" id="MF_03154">
    <property type="entry name" value="Salvage_MtnD_euk"/>
    <property type="match status" value="1"/>
</dbReference>
<dbReference type="InterPro" id="IPR004313">
    <property type="entry name" value="ARD"/>
</dbReference>
<dbReference type="InterPro" id="IPR027496">
    <property type="entry name" value="ARD_euk"/>
</dbReference>
<dbReference type="InterPro" id="IPR014710">
    <property type="entry name" value="RmlC-like_jellyroll"/>
</dbReference>
<dbReference type="InterPro" id="IPR011051">
    <property type="entry name" value="RmlC_Cupin_sf"/>
</dbReference>
<dbReference type="PANTHER" id="PTHR23418">
    <property type="entry name" value="ACIREDUCTONE DIOXYGENASE"/>
    <property type="match status" value="1"/>
</dbReference>
<dbReference type="PANTHER" id="PTHR23418:SF0">
    <property type="entry name" value="ACIREDUCTONE DIOXYGENASE"/>
    <property type="match status" value="1"/>
</dbReference>
<dbReference type="Pfam" id="PF03079">
    <property type="entry name" value="ARD"/>
    <property type="match status" value="1"/>
</dbReference>
<dbReference type="SUPFAM" id="SSF51182">
    <property type="entry name" value="RmlC-like cupins"/>
    <property type="match status" value="1"/>
</dbReference>
<protein>
    <recommendedName>
        <fullName evidence="1">Acireductone dioxygenase 1</fullName>
    </recommendedName>
    <alternativeName>
        <fullName evidence="1">Acireductone dioxygenase (Fe(2+)-requiring) 1</fullName>
        <shortName evidence="1">ARD' 1</shortName>
        <shortName evidence="1">Fe-ARD 1</shortName>
        <ecNumber evidence="1">1.13.11.54</ecNumber>
    </alternativeName>
    <alternativeName>
        <fullName evidence="1">Acireductone dioxygenase (Ni(2+)-requiring) 1</fullName>
        <shortName evidence="1">ARD 1</shortName>
        <shortName evidence="1">Ni-ARD 1</shortName>
        <ecNumber evidence="1">1.13.11.53</ecNumber>
    </alternativeName>
</protein>
<evidence type="ECO:0000255" key="1">
    <source>
        <dbReference type="HAMAP-Rule" id="MF_03154"/>
    </source>
</evidence>